<protein>
    <recommendedName>
        <fullName evidence="2">Phosphatidylinositol-3,5-bisphosphate 3-phosphatase MTMR3</fullName>
        <ecNumber evidence="2">3.1.3.95</ecNumber>
    </recommendedName>
    <alternativeName>
        <fullName evidence="10">Myotubularin-related protein 3</fullName>
    </alternativeName>
    <alternativeName>
        <fullName evidence="2">Phosphatidylinositol-3,5-bisphosphate 3-phosphatase</fullName>
    </alternativeName>
    <alternativeName>
        <fullName evidence="2">Phosphatidylinositol-3-phosphate phosphatase</fullName>
    </alternativeName>
</protein>
<accession>Q5PQT2</accession>
<dbReference type="EC" id="3.1.3.95" evidence="2"/>
<dbReference type="EMBL" id="BC087045">
    <property type="protein sequence ID" value="AAH87045.1"/>
    <property type="molecule type" value="mRNA"/>
</dbReference>
<dbReference type="RefSeq" id="NP_001012038.1">
    <property type="nucleotide sequence ID" value="NM_001012038.1"/>
</dbReference>
<dbReference type="SMR" id="Q5PQT2"/>
<dbReference type="FunCoup" id="Q5PQT2">
    <property type="interactions" value="2828"/>
</dbReference>
<dbReference type="STRING" id="10116.ENSRNOP00000074555"/>
<dbReference type="iPTMnet" id="Q5PQT2"/>
<dbReference type="PhosphoSitePlus" id="Q5PQT2"/>
<dbReference type="jPOST" id="Q5PQT2"/>
<dbReference type="PaxDb" id="10116-ENSRNOP00000054309"/>
<dbReference type="Ensembl" id="ENSRNOT00000057501.3">
    <property type="protein sequence ID" value="ENSRNOP00000054309.2"/>
    <property type="gene ID" value="ENSRNOG00000007120.8"/>
</dbReference>
<dbReference type="GeneID" id="305482"/>
<dbReference type="KEGG" id="rno:305482"/>
<dbReference type="UCSC" id="RGD:1310972">
    <property type="organism name" value="rat"/>
</dbReference>
<dbReference type="AGR" id="RGD:1310972"/>
<dbReference type="CTD" id="8897"/>
<dbReference type="RGD" id="1310972">
    <property type="gene designation" value="Mtmr3"/>
</dbReference>
<dbReference type="eggNOG" id="KOG4471">
    <property type="taxonomic scope" value="Eukaryota"/>
</dbReference>
<dbReference type="GeneTree" id="ENSGT00940000157272"/>
<dbReference type="InParanoid" id="Q5PQT2"/>
<dbReference type="OrthoDB" id="271628at2759"/>
<dbReference type="PhylomeDB" id="Q5PQT2"/>
<dbReference type="Reactome" id="R-RNO-1632852">
    <property type="pathway name" value="Macroautophagy"/>
</dbReference>
<dbReference type="Reactome" id="R-RNO-1660499">
    <property type="pathway name" value="Synthesis of PIPs at the plasma membrane"/>
</dbReference>
<dbReference type="PRO" id="PR:Q5PQT2"/>
<dbReference type="Proteomes" id="UP000002494">
    <property type="component" value="Chromosome 14"/>
</dbReference>
<dbReference type="Bgee" id="ENSRNOG00000007120">
    <property type="expression patterns" value="Expressed in skeletal muscle tissue and 19 other cell types or tissues"/>
</dbReference>
<dbReference type="ExpressionAtlas" id="Q5PQT2">
    <property type="expression patterns" value="baseline and differential"/>
</dbReference>
<dbReference type="GO" id="GO:0005737">
    <property type="term" value="C:cytoplasm"/>
    <property type="evidence" value="ECO:0000250"/>
    <property type="project" value="UniProtKB"/>
</dbReference>
<dbReference type="GO" id="GO:0005829">
    <property type="term" value="C:cytosol"/>
    <property type="evidence" value="ECO:0007669"/>
    <property type="project" value="UniProtKB-SubCell"/>
</dbReference>
<dbReference type="GO" id="GO:0016020">
    <property type="term" value="C:membrane"/>
    <property type="evidence" value="ECO:0000266"/>
    <property type="project" value="RGD"/>
</dbReference>
<dbReference type="GO" id="GO:0060090">
    <property type="term" value="F:molecular adaptor activity"/>
    <property type="evidence" value="ECO:0000266"/>
    <property type="project" value="RGD"/>
</dbReference>
<dbReference type="GO" id="GO:0052629">
    <property type="term" value="F:phosphatidylinositol-3,5-bisphosphate 3-phosphatase activity"/>
    <property type="evidence" value="ECO:0000250"/>
    <property type="project" value="UniProtKB"/>
</dbReference>
<dbReference type="GO" id="GO:0004438">
    <property type="term" value="F:phosphatidylinositol-3-phosphate phosphatase activity"/>
    <property type="evidence" value="ECO:0000250"/>
    <property type="project" value="UniProtKB"/>
</dbReference>
<dbReference type="GO" id="GO:0019903">
    <property type="term" value="F:protein phosphatase binding"/>
    <property type="evidence" value="ECO:0000266"/>
    <property type="project" value="RGD"/>
</dbReference>
<dbReference type="GO" id="GO:0004722">
    <property type="term" value="F:protein serine/threonine phosphatase activity"/>
    <property type="evidence" value="ECO:0000266"/>
    <property type="project" value="RGD"/>
</dbReference>
<dbReference type="GO" id="GO:0004725">
    <property type="term" value="F:protein tyrosine phosphatase activity"/>
    <property type="evidence" value="ECO:0000266"/>
    <property type="project" value="RGD"/>
</dbReference>
<dbReference type="GO" id="GO:0008138">
    <property type="term" value="F:protein tyrosine/serine/threonine phosphatase activity"/>
    <property type="evidence" value="ECO:0000266"/>
    <property type="project" value="RGD"/>
</dbReference>
<dbReference type="GO" id="GO:0008270">
    <property type="term" value="F:zinc ion binding"/>
    <property type="evidence" value="ECO:0007669"/>
    <property type="project" value="UniProtKB-KW"/>
</dbReference>
<dbReference type="GO" id="GO:0042149">
    <property type="term" value="P:cellular response to glucose starvation"/>
    <property type="evidence" value="ECO:0000266"/>
    <property type="project" value="RGD"/>
</dbReference>
<dbReference type="GO" id="GO:0061952">
    <property type="term" value="P:midbody abscission"/>
    <property type="evidence" value="ECO:0000266"/>
    <property type="project" value="RGD"/>
</dbReference>
<dbReference type="GO" id="GO:1904562">
    <property type="term" value="P:phosphatidylinositol 5-phosphate metabolic process"/>
    <property type="evidence" value="ECO:0000266"/>
    <property type="project" value="RGD"/>
</dbReference>
<dbReference type="GO" id="GO:0046856">
    <property type="term" value="P:phosphatidylinositol dephosphorylation"/>
    <property type="evidence" value="ECO:0000250"/>
    <property type="project" value="UniProtKB"/>
</dbReference>
<dbReference type="GO" id="GO:2000785">
    <property type="term" value="P:regulation of autophagosome assembly"/>
    <property type="evidence" value="ECO:0000266"/>
    <property type="project" value="RGD"/>
</dbReference>
<dbReference type="GO" id="GO:0060304">
    <property type="term" value="P:regulation of phosphatidylinositol dephosphorylation"/>
    <property type="evidence" value="ECO:0000266"/>
    <property type="project" value="RGD"/>
</dbReference>
<dbReference type="CDD" id="cd15732">
    <property type="entry name" value="FYVE_MTMR3"/>
    <property type="match status" value="1"/>
</dbReference>
<dbReference type="CDD" id="cd13341">
    <property type="entry name" value="PH-GRAM_MTMR3"/>
    <property type="match status" value="1"/>
</dbReference>
<dbReference type="CDD" id="cd14586">
    <property type="entry name" value="PTP-MTMR3"/>
    <property type="match status" value="1"/>
</dbReference>
<dbReference type="FunFam" id="3.30.40.10:FF:000073">
    <property type="entry name" value="myotubularin-related protein 4 isoform X2"/>
    <property type="match status" value="1"/>
</dbReference>
<dbReference type="Gene3D" id="3.90.190.10">
    <property type="entry name" value="Protein tyrosine phosphatase superfamily"/>
    <property type="match status" value="1"/>
</dbReference>
<dbReference type="Gene3D" id="3.30.40.10">
    <property type="entry name" value="Zinc/RING finger domain, C3HC4 (zinc finger)"/>
    <property type="match status" value="1"/>
</dbReference>
<dbReference type="InterPro" id="IPR035888">
    <property type="entry name" value="MTMR3_PH-GRAM"/>
</dbReference>
<dbReference type="InterPro" id="IPR046352">
    <property type="entry name" value="MTMR3_PTP"/>
</dbReference>
<dbReference type="InterPro" id="IPR030564">
    <property type="entry name" value="Myotubularin"/>
</dbReference>
<dbReference type="InterPro" id="IPR010569">
    <property type="entry name" value="Myotubularin-like_Pase_dom"/>
</dbReference>
<dbReference type="InterPro" id="IPR029021">
    <property type="entry name" value="Prot-tyrosine_phosphatase-like"/>
</dbReference>
<dbReference type="InterPro" id="IPR016130">
    <property type="entry name" value="Tyr_Pase_AS"/>
</dbReference>
<dbReference type="InterPro" id="IPR003595">
    <property type="entry name" value="Tyr_Pase_cat"/>
</dbReference>
<dbReference type="InterPro" id="IPR000306">
    <property type="entry name" value="Znf_FYVE"/>
</dbReference>
<dbReference type="InterPro" id="IPR017455">
    <property type="entry name" value="Znf_FYVE-rel"/>
</dbReference>
<dbReference type="InterPro" id="IPR011011">
    <property type="entry name" value="Znf_FYVE_PHD"/>
</dbReference>
<dbReference type="InterPro" id="IPR013083">
    <property type="entry name" value="Znf_RING/FYVE/PHD"/>
</dbReference>
<dbReference type="PANTHER" id="PTHR10807">
    <property type="entry name" value="MYOTUBULARIN-RELATED"/>
    <property type="match status" value="1"/>
</dbReference>
<dbReference type="PANTHER" id="PTHR10807:SF66">
    <property type="entry name" value="MYOTUBULARIN-RELATED PROTEIN 3"/>
    <property type="match status" value="1"/>
</dbReference>
<dbReference type="Pfam" id="PF01363">
    <property type="entry name" value="FYVE"/>
    <property type="match status" value="1"/>
</dbReference>
<dbReference type="Pfam" id="PF06602">
    <property type="entry name" value="Myotub-related"/>
    <property type="match status" value="1"/>
</dbReference>
<dbReference type="SMART" id="SM00064">
    <property type="entry name" value="FYVE"/>
    <property type="match status" value="1"/>
</dbReference>
<dbReference type="SMART" id="SM00404">
    <property type="entry name" value="PTPc_motif"/>
    <property type="match status" value="1"/>
</dbReference>
<dbReference type="SUPFAM" id="SSF52799">
    <property type="entry name" value="(Phosphotyrosine protein) phosphatases II"/>
    <property type="match status" value="1"/>
</dbReference>
<dbReference type="SUPFAM" id="SSF57903">
    <property type="entry name" value="FYVE/PHD zinc finger"/>
    <property type="match status" value="1"/>
</dbReference>
<dbReference type="SUPFAM" id="SSF50729">
    <property type="entry name" value="PH domain-like"/>
    <property type="match status" value="1"/>
</dbReference>
<dbReference type="PROSITE" id="PS51339">
    <property type="entry name" value="PPASE_MYOTUBULARIN"/>
    <property type="match status" value="1"/>
</dbReference>
<dbReference type="PROSITE" id="PS00383">
    <property type="entry name" value="TYR_PHOSPHATASE_1"/>
    <property type="match status" value="1"/>
</dbReference>
<dbReference type="PROSITE" id="PS50178">
    <property type="entry name" value="ZF_FYVE"/>
    <property type="match status" value="1"/>
</dbReference>
<reference key="1">
    <citation type="journal article" date="2004" name="Genome Res.">
        <title>The status, quality, and expansion of the NIH full-length cDNA project: the Mammalian Gene Collection (MGC).</title>
        <authorList>
            <consortium name="The MGC Project Team"/>
        </authorList>
    </citation>
    <scope>NUCLEOTIDE SEQUENCE [LARGE SCALE MRNA]</scope>
    <source>
        <tissue>Kidney</tissue>
    </source>
</reference>
<reference key="2">
    <citation type="journal article" date="2012" name="Nat. Commun.">
        <title>Quantitative maps of protein phosphorylation sites across 14 different rat organs and tissues.</title>
        <authorList>
            <person name="Lundby A."/>
            <person name="Secher A."/>
            <person name="Lage K."/>
            <person name="Nordsborg N.B."/>
            <person name="Dmytriyev A."/>
            <person name="Lundby C."/>
            <person name="Olsen J.V."/>
        </authorList>
    </citation>
    <scope>PHOSPHORYLATION [LARGE SCALE ANALYSIS] AT SER-609</scope>
    <scope>IDENTIFICATION BY MASS SPECTROMETRY [LARGE SCALE ANALYSIS]</scope>
</reference>
<sequence length="1194" mass="133500">MRHSLECIQANQIFPRKQLIREDENLQVPFLELHGESTEYVGRAEDAIIALSNYRLHIKFKESLVNVPLQLIESVECRDIFQLHLTCKDCKVIRCQFPTFEQCQDWLKRLNNAIRPPGKIEDLFSFAYHAWCMEVYASEKEQHGDLCRPGEHVTSRFKNEVERMGFDMNNAWRISNINEKYKLCGSYPQELIVPAWITDKELESVAGFRSWKRIPAVIYRHQSNGAVIARCGQPEVSWWGWRNADDEHLVQSVAKACASDSQSSVGKVSTRNSCRGFPNAGDLSDVEFDASLSNASGTESLALQPQKLLILDARSYAAAVANRAKGGGCECPEYYPNCEVVFMGMANIHSIRRSFQSLRLLCTQMPDPGNWLSALESTKWLHHLSVLLKSALLVVHAVDRDQRPVLVHCSDGWDRTPQIVALAKLLLDPYYRTVEGFQVLVEMEWLDFGHKFADRCGHGENSDDLNERCPVFLQWLDCVHQLQRQFPCSFEFNEAFLVKLVQHTYSCLFGTFLCNNAKERGEKQTQERTCSVWSLLRAGNKAFKNLLYSSQSEAVLYPVCHVRNLMLWSAVYLPCPSPSTPTDDSCAPYPAPGTSPDEPPLSRLPKTRSFDNLTTTCDNMVPLASRRSSDPSLNEKWQEHGRSLELSSFAGSGEEVPAIDSLRRPSRLLGGAELSVAAGVAEGQMENILQEATKEESGVEEPTHREHTEVPEVKEEAPLAKESRTAAQGSGVLYQEPQLDDATLRSHLGPSLSSFSQGIPEHREVGHSVLSSSLPASLRGEDSQEVPVEQPQVENIAEDRENVVPAVPVDVKIGLGTSESSPLLPSQVPFETRGPHMNNSVHMLLEDKVKSESGPQLHHRPCLASSGRFSGKDMLPIAPEPRSAERPQWDSVLHRTSSPGNTLSLMMQAPCALPLDKCRQRIVCNGALETENKASEQPAGFDTLQKYPTPNGHCANGETGRSKDSLSHQLSATSYSSAHSCSRNLHHKWLNSHSGRPSTTNSPEQPSRSHLDDDGMPVYTDTIQQRLRQIESGHQQEVETLKKQVQELKSRLESQYLTSSLRFNGDFGDEVTSIPDSESNLDQNCLSRCSTEIFSEASWEQVDKQDTEMTRWLPDHLAAHCYACDSAFWLASRKHHCRNCGNVFCSSCCNQKVPVPSQQLFEPSRVCKSCYSSLHPTSSSIDLELDKPIAATSN</sequence>
<keyword id="KW-0175">Coiled coil</keyword>
<keyword id="KW-0963">Cytoplasm</keyword>
<keyword id="KW-0378">Hydrolase</keyword>
<keyword id="KW-0443">Lipid metabolism</keyword>
<keyword id="KW-0472">Membrane</keyword>
<keyword id="KW-0479">Metal-binding</keyword>
<keyword id="KW-0597">Phosphoprotein</keyword>
<keyword id="KW-1185">Reference proteome</keyword>
<keyword id="KW-0862">Zinc</keyword>
<keyword id="KW-0863">Zinc-finger</keyword>
<evidence type="ECO:0000250" key="1">
    <source>
        <dbReference type="UniProtKB" id="Q13614"/>
    </source>
</evidence>
<evidence type="ECO:0000250" key="2">
    <source>
        <dbReference type="UniProtKB" id="Q13615"/>
    </source>
</evidence>
<evidence type="ECO:0000250" key="3">
    <source>
        <dbReference type="UniProtKB" id="Q8K296"/>
    </source>
</evidence>
<evidence type="ECO:0000255" key="4"/>
<evidence type="ECO:0000255" key="5">
    <source>
        <dbReference type="PROSITE-ProRule" id="PRU00091"/>
    </source>
</evidence>
<evidence type="ECO:0000255" key="6">
    <source>
        <dbReference type="PROSITE-ProRule" id="PRU00669"/>
    </source>
</evidence>
<evidence type="ECO:0000255" key="7">
    <source>
        <dbReference type="PROSITE-ProRule" id="PRU10044"/>
    </source>
</evidence>
<evidence type="ECO:0000256" key="8">
    <source>
        <dbReference type="SAM" id="MobiDB-lite"/>
    </source>
</evidence>
<evidence type="ECO:0000305" key="9"/>
<evidence type="ECO:0000312" key="10">
    <source>
        <dbReference type="RGD" id="1310972"/>
    </source>
</evidence>
<evidence type="ECO:0007744" key="11">
    <source>
    </source>
</evidence>
<feature type="chain" id="PRO_0000304808" description="Phosphatidylinositol-3,5-bisphosphate 3-phosphatase MTMR3">
    <location>
        <begin position="1"/>
        <end position="1194"/>
    </location>
</feature>
<feature type="domain" description="Myotubularin phosphatase" evidence="6">
    <location>
        <begin position="151"/>
        <end position="572"/>
    </location>
</feature>
<feature type="zinc finger region" description="FYVE-type" evidence="5">
    <location>
        <begin position="1115"/>
        <end position="1175"/>
    </location>
</feature>
<feature type="region of interest" description="Disordered" evidence="8">
    <location>
        <begin position="583"/>
        <end position="609"/>
    </location>
</feature>
<feature type="region of interest" description="Disordered" evidence="8">
    <location>
        <begin position="693"/>
        <end position="731"/>
    </location>
</feature>
<feature type="region of interest" description="Disordered" evidence="8">
    <location>
        <begin position="852"/>
        <end position="871"/>
    </location>
</feature>
<feature type="region of interest" description="Disordered" evidence="8">
    <location>
        <begin position="876"/>
        <end position="897"/>
    </location>
</feature>
<feature type="region of interest" description="Disordered" evidence="8">
    <location>
        <begin position="932"/>
        <end position="971"/>
    </location>
</feature>
<feature type="region of interest" description="Disordered" evidence="8">
    <location>
        <begin position="988"/>
        <end position="1017"/>
    </location>
</feature>
<feature type="coiled-coil region" evidence="4">
    <location>
        <begin position="1025"/>
        <end position="1058"/>
    </location>
</feature>
<feature type="compositionally biased region" description="Pro residues" evidence="8">
    <location>
        <begin position="589"/>
        <end position="599"/>
    </location>
</feature>
<feature type="compositionally biased region" description="Basic and acidic residues" evidence="8">
    <location>
        <begin position="693"/>
        <end position="724"/>
    </location>
</feature>
<feature type="compositionally biased region" description="Polar residues" evidence="8">
    <location>
        <begin position="991"/>
        <end position="1006"/>
    </location>
</feature>
<feature type="active site" description="Phosphocysteine intermediate" evidence="7">
    <location>
        <position position="409"/>
    </location>
</feature>
<feature type="binding site" evidence="1">
    <location>
        <position position="322"/>
    </location>
    <ligand>
        <name>a 1,2-diacyl-sn-glycero-3-phospho-(1D-myo-inositol-3,5-bisphosphate)</name>
        <dbReference type="ChEBI" id="CHEBI:57923"/>
    </ligand>
</feature>
<feature type="binding site" evidence="1">
    <location>
        <position position="322"/>
    </location>
    <ligand>
        <name>a 1,2-diacyl-sn-glycero-3-phospho-(1D-myo-inositol-3-phosphate)</name>
        <dbReference type="ChEBI" id="CHEBI:58088"/>
    </ligand>
</feature>
<feature type="binding site" evidence="1">
    <location>
        <position position="347"/>
    </location>
    <ligand>
        <name>a 1,2-diacyl-sn-glycero-3-phospho-(1D-myo-inositol-3,5-bisphosphate)</name>
        <dbReference type="ChEBI" id="CHEBI:57923"/>
    </ligand>
</feature>
<feature type="binding site" evidence="1">
    <location>
        <position position="347"/>
    </location>
    <ligand>
        <name>a 1,2-diacyl-sn-glycero-3-phospho-(1D-myo-inositol-3-phosphate)</name>
        <dbReference type="ChEBI" id="CHEBI:58088"/>
    </ligand>
</feature>
<feature type="binding site" evidence="1">
    <location>
        <position position="348"/>
    </location>
    <ligand>
        <name>a 1,2-diacyl-sn-glycero-3-phospho-(1D-myo-inositol-3,5-bisphosphate)</name>
        <dbReference type="ChEBI" id="CHEBI:57923"/>
    </ligand>
</feature>
<feature type="binding site" evidence="1">
    <location>
        <position position="348"/>
    </location>
    <ligand>
        <name>a 1,2-diacyl-sn-glycero-3-phospho-(1D-myo-inositol-3-phosphate)</name>
        <dbReference type="ChEBI" id="CHEBI:58088"/>
    </ligand>
</feature>
<feature type="binding site" evidence="1">
    <location>
        <position position="410"/>
    </location>
    <ligand>
        <name>a 1,2-diacyl-sn-glycero-3-phospho-(1D-myo-inositol-3,5-bisphosphate)</name>
        <dbReference type="ChEBI" id="CHEBI:57923"/>
    </ligand>
</feature>
<feature type="binding site" evidence="1">
    <location>
        <position position="410"/>
    </location>
    <ligand>
        <name>a 1,2-diacyl-sn-glycero-3-phospho-(1D-myo-inositol-3-phosphate)</name>
        <dbReference type="ChEBI" id="CHEBI:58088"/>
    </ligand>
</feature>
<feature type="binding site" evidence="1">
    <location>
        <position position="411"/>
    </location>
    <ligand>
        <name>a 1,2-diacyl-sn-glycero-3-phospho-(1D-myo-inositol-3,5-bisphosphate)</name>
        <dbReference type="ChEBI" id="CHEBI:57923"/>
    </ligand>
</feature>
<feature type="binding site" evidence="1">
    <location>
        <position position="411"/>
    </location>
    <ligand>
        <name>a 1,2-diacyl-sn-glycero-3-phospho-(1D-myo-inositol-3-phosphate)</name>
        <dbReference type="ChEBI" id="CHEBI:58088"/>
    </ligand>
</feature>
<feature type="binding site" evidence="1">
    <location>
        <position position="412"/>
    </location>
    <ligand>
        <name>a 1,2-diacyl-sn-glycero-3-phospho-(1D-myo-inositol-3,5-bisphosphate)</name>
        <dbReference type="ChEBI" id="CHEBI:57923"/>
    </ligand>
</feature>
<feature type="binding site" evidence="1">
    <location>
        <position position="412"/>
    </location>
    <ligand>
        <name>a 1,2-diacyl-sn-glycero-3-phospho-(1D-myo-inositol-3-phosphate)</name>
        <dbReference type="ChEBI" id="CHEBI:58088"/>
    </ligand>
</feature>
<feature type="binding site" evidence="1">
    <location>
        <position position="413"/>
    </location>
    <ligand>
        <name>a 1,2-diacyl-sn-glycero-3-phospho-(1D-myo-inositol-3,5-bisphosphate)</name>
        <dbReference type="ChEBI" id="CHEBI:57923"/>
    </ligand>
</feature>
<feature type="binding site" evidence="1">
    <location>
        <position position="413"/>
    </location>
    <ligand>
        <name>a 1,2-diacyl-sn-glycero-3-phospho-(1D-myo-inositol-3-phosphate)</name>
        <dbReference type="ChEBI" id="CHEBI:58088"/>
    </ligand>
</feature>
<feature type="binding site" evidence="1">
    <location>
        <position position="414"/>
    </location>
    <ligand>
        <name>a 1,2-diacyl-sn-glycero-3-phospho-(1D-myo-inositol-3,5-bisphosphate)</name>
        <dbReference type="ChEBI" id="CHEBI:57923"/>
    </ligand>
</feature>
<feature type="binding site" evidence="1">
    <location>
        <position position="414"/>
    </location>
    <ligand>
        <name>a 1,2-diacyl-sn-glycero-3-phospho-(1D-myo-inositol-3-phosphate)</name>
        <dbReference type="ChEBI" id="CHEBI:58088"/>
    </ligand>
</feature>
<feature type="binding site" evidence="1">
    <location>
        <position position="415"/>
    </location>
    <ligand>
        <name>a 1,2-diacyl-sn-glycero-3-phospho-(1D-myo-inositol-3,5-bisphosphate)</name>
        <dbReference type="ChEBI" id="CHEBI:57923"/>
    </ligand>
</feature>
<feature type="binding site" evidence="1">
    <location>
        <position position="415"/>
    </location>
    <ligand>
        <name>a 1,2-diacyl-sn-glycero-3-phospho-(1D-myo-inositol-3-phosphate)</name>
        <dbReference type="ChEBI" id="CHEBI:58088"/>
    </ligand>
</feature>
<feature type="binding site" evidence="1">
    <location>
        <position position="451"/>
    </location>
    <ligand>
        <name>a 1,2-diacyl-sn-glycero-3-phospho-(1D-myo-inositol-3,5-bisphosphate)</name>
        <dbReference type="ChEBI" id="CHEBI:57923"/>
    </ligand>
</feature>
<feature type="binding site" evidence="1">
    <location>
        <position position="455"/>
    </location>
    <ligand>
        <name>a 1,2-diacyl-sn-glycero-3-phospho-(1D-myo-inositol-3,5-bisphosphate)</name>
        <dbReference type="ChEBI" id="CHEBI:57923"/>
    </ligand>
</feature>
<feature type="binding site" evidence="1">
    <location>
        <position position="455"/>
    </location>
    <ligand>
        <name>a 1,2-diacyl-sn-glycero-3-phospho-(1D-myo-inositol-3-phosphate)</name>
        <dbReference type="ChEBI" id="CHEBI:58088"/>
    </ligand>
</feature>
<feature type="binding site" evidence="5">
    <location>
        <position position="1121"/>
    </location>
    <ligand>
        <name>Zn(2+)</name>
        <dbReference type="ChEBI" id="CHEBI:29105"/>
        <label>1</label>
    </ligand>
</feature>
<feature type="binding site" evidence="5">
    <location>
        <position position="1124"/>
    </location>
    <ligand>
        <name>Zn(2+)</name>
        <dbReference type="ChEBI" id="CHEBI:29105"/>
        <label>1</label>
    </ligand>
</feature>
<feature type="binding site" evidence="5">
    <location>
        <position position="1137"/>
    </location>
    <ligand>
        <name>Zn(2+)</name>
        <dbReference type="ChEBI" id="CHEBI:29105"/>
        <label>2</label>
    </ligand>
</feature>
<feature type="binding site" evidence="5">
    <location>
        <position position="1140"/>
    </location>
    <ligand>
        <name>Zn(2+)</name>
        <dbReference type="ChEBI" id="CHEBI:29105"/>
        <label>2</label>
    </ligand>
</feature>
<feature type="binding site" evidence="5">
    <location>
        <position position="1145"/>
    </location>
    <ligand>
        <name>Zn(2+)</name>
        <dbReference type="ChEBI" id="CHEBI:29105"/>
        <label>1</label>
    </ligand>
</feature>
<feature type="binding site" evidence="5">
    <location>
        <position position="1148"/>
    </location>
    <ligand>
        <name>Zn(2+)</name>
        <dbReference type="ChEBI" id="CHEBI:29105"/>
        <label>1</label>
    </ligand>
</feature>
<feature type="binding site" evidence="5">
    <location>
        <position position="1167"/>
    </location>
    <ligand>
        <name>Zn(2+)</name>
        <dbReference type="ChEBI" id="CHEBI:29105"/>
        <label>2</label>
    </ligand>
</feature>
<feature type="binding site" evidence="5">
    <location>
        <position position="1170"/>
    </location>
    <ligand>
        <name>Zn(2+)</name>
        <dbReference type="ChEBI" id="CHEBI:29105"/>
        <label>2</label>
    </ligand>
</feature>
<feature type="modified residue" description="Phosphoserine" evidence="2">
    <location>
        <position position="4"/>
    </location>
</feature>
<feature type="modified residue" description="Phosphoserine" evidence="11">
    <location>
        <position position="609"/>
    </location>
</feature>
<feature type="modified residue" description="Phosphoserine" evidence="2">
    <location>
        <position position="629"/>
    </location>
</feature>
<feature type="modified residue" description="Phosphoserine" evidence="2">
    <location>
        <position position="643"/>
    </location>
</feature>
<feature type="modified residue" description="Phosphoserine" evidence="2">
    <location>
        <position position="647"/>
    </location>
</feature>
<feature type="modified residue" description="Phosphothreonine" evidence="2">
    <location>
        <position position="725"/>
    </location>
</feature>
<feature type="modified residue" description="Phosphoserine" evidence="2">
    <location>
        <position position="904"/>
    </location>
</feature>
<feature type="modified residue" description="Phosphoserine" evidence="3">
    <location>
        <position position="1060"/>
    </location>
</feature>
<gene>
    <name evidence="10" type="primary">Mtmr3</name>
</gene>
<name>MTMR3_RAT</name>
<comment type="function">
    <text evidence="2">Lipid phosphatase that specifically dephosphorylates the D-3 position of phosphatidylinositol 3-phosphate and phosphatidylinositol 3,5-bisphosphate, generating phosphatidylinositol and phosphatidylinositol 5-phosphate. Decreases the levels of phosphatidylinositol 3-phosphate, a phospholipid found in cell membranes where it acts as key regulator of both cell signaling and intracellular membrane traffic. Could also have a molecular sequestering/adapter activity and regulate biological processes independently of its phosphatase activity. It includes the regulation of midbody abscission during mitotic cytokinesis.</text>
</comment>
<comment type="catalytic activity">
    <reaction evidence="2">
        <text>a 1,2-diacyl-sn-glycero-3-phospho-(1D-myo-inositol-3,5-bisphosphate) + H2O = a 1,2-diacyl-sn-glycero-3-phospho-(1D-myo-inositol-5-phosphate) + phosphate</text>
        <dbReference type="Rhea" id="RHEA:39019"/>
        <dbReference type="ChEBI" id="CHEBI:15377"/>
        <dbReference type="ChEBI" id="CHEBI:43474"/>
        <dbReference type="ChEBI" id="CHEBI:57795"/>
        <dbReference type="ChEBI" id="CHEBI:57923"/>
        <dbReference type="EC" id="3.1.3.95"/>
    </reaction>
</comment>
<comment type="catalytic activity">
    <reaction evidence="2">
        <text>a 1,2-diacyl-sn-glycero-3-phospho-(1D-myo-inositol-3-phosphate) + H2O = a 1,2-diacyl-sn-glycero-3-phospho-(1D-myo-inositol) + phosphate</text>
        <dbReference type="Rhea" id="RHEA:12316"/>
        <dbReference type="ChEBI" id="CHEBI:15377"/>
        <dbReference type="ChEBI" id="CHEBI:43474"/>
        <dbReference type="ChEBI" id="CHEBI:57880"/>
        <dbReference type="ChEBI" id="CHEBI:58088"/>
    </reaction>
</comment>
<comment type="catalytic activity">
    <reaction evidence="2">
        <text>1,2-dihexadecanoyl-sn-glycero-3-phospho-(1D-myo-inositol-3-phosphate) + H2O = 1,2-dihexadecanoyl-sn-glycero-3-phospho-(1D-myo-inositol) + phosphate</text>
        <dbReference type="Rhea" id="RHEA:45640"/>
        <dbReference type="ChEBI" id="CHEBI:15377"/>
        <dbReference type="ChEBI" id="CHEBI:43474"/>
        <dbReference type="ChEBI" id="CHEBI:72835"/>
        <dbReference type="ChEBI" id="CHEBI:78995"/>
    </reaction>
</comment>
<comment type="catalytic activity">
    <reaction evidence="2">
        <text>1,2-dioctanoyl-sn-glycero-3-phospho-(1-D-myo-inositol-3-phosphate) + H2O = 1,2-dioctanoyl-sn-glycero-3-phospho-(1D-myo-inositol) + phosphate</text>
        <dbReference type="Rhea" id="RHEA:42328"/>
        <dbReference type="ChEBI" id="CHEBI:15377"/>
        <dbReference type="ChEBI" id="CHEBI:43474"/>
        <dbReference type="ChEBI" id="CHEBI:65221"/>
        <dbReference type="ChEBI" id="CHEBI:78934"/>
    </reaction>
</comment>
<comment type="catalytic activity">
    <reaction evidence="2">
        <text>1,2-dihexadecanoyl-sn-glycero-3-phospho-(1D-myo-inositol-3,5-phosphate) + H2O = 1,2-dihexadecanoyl-sn-glycero-3-phospho-(1D-myo-inositol-5-phosphate) + phosphate</text>
        <dbReference type="Rhea" id="RHEA:45636"/>
        <dbReference type="ChEBI" id="CHEBI:15377"/>
        <dbReference type="ChEBI" id="CHEBI:43474"/>
        <dbReference type="ChEBI" id="CHEBI:78994"/>
        <dbReference type="ChEBI" id="CHEBI:84968"/>
    </reaction>
</comment>
<comment type="subunit">
    <text evidence="2">Forms heterodimers with MTMR4 that recruit both CEP55 and PLK1; occurs during early mitosis, regulates the phosphorylation of CEP55 by PLK1 and its recruitment to the midbody where it mediates cell abscission.</text>
</comment>
<comment type="subcellular location">
    <subcellularLocation>
        <location evidence="2">Cytoplasm</location>
        <location evidence="2">Cytosol</location>
    </subcellularLocation>
    <subcellularLocation>
        <location evidence="2">Membrane</location>
        <topology evidence="2">Peripheral membrane protein</topology>
    </subcellularLocation>
</comment>
<comment type="domain">
    <text evidence="2">The coiled coil domain mediates the interaction between MTMR3 and MTMR4. It is essential to bring together CEP55 and PLK1 during mitotic abscission.</text>
</comment>
<comment type="similarity">
    <text evidence="9">Belongs to the protein-tyrosine phosphatase family. Non-receptor class myotubularin subfamily.</text>
</comment>
<organism>
    <name type="scientific">Rattus norvegicus</name>
    <name type="common">Rat</name>
    <dbReference type="NCBI Taxonomy" id="10116"/>
    <lineage>
        <taxon>Eukaryota</taxon>
        <taxon>Metazoa</taxon>
        <taxon>Chordata</taxon>
        <taxon>Craniata</taxon>
        <taxon>Vertebrata</taxon>
        <taxon>Euteleostomi</taxon>
        <taxon>Mammalia</taxon>
        <taxon>Eutheria</taxon>
        <taxon>Euarchontoglires</taxon>
        <taxon>Glires</taxon>
        <taxon>Rodentia</taxon>
        <taxon>Myomorpha</taxon>
        <taxon>Muroidea</taxon>
        <taxon>Muridae</taxon>
        <taxon>Murinae</taxon>
        <taxon>Rattus</taxon>
    </lineage>
</organism>
<proteinExistence type="evidence at protein level"/>